<gene>
    <name type="primary">RUP1</name>
    <name type="ordered locus">YOR138C</name>
    <name type="ORF">YOR3332c</name>
</gene>
<accession>Q12242</accession>
<accession>D6W2J5</accession>
<reference key="1">
    <citation type="journal article" date="1997" name="Yeast">
        <title>DNA sequencing and analysis of 130 kb from yeast chromosome XV.</title>
        <authorList>
            <person name="Voss H."/>
            <person name="Benes V."/>
            <person name="Andrade M.A."/>
            <person name="Valencia A."/>
            <person name="Rechmann S."/>
            <person name="Teodoru C."/>
            <person name="Schwager C."/>
            <person name="Paces V."/>
            <person name="Sander C."/>
            <person name="Ansorge W."/>
        </authorList>
    </citation>
    <scope>NUCLEOTIDE SEQUENCE [GENOMIC DNA]</scope>
    <source>
        <strain>ATCC 96604 / S288c / FY1679</strain>
    </source>
</reference>
<reference key="2">
    <citation type="journal article" date="1997" name="Nature">
        <title>The nucleotide sequence of Saccharomyces cerevisiae chromosome XV.</title>
        <authorList>
            <person name="Dujon B."/>
            <person name="Albermann K."/>
            <person name="Aldea M."/>
            <person name="Alexandraki D."/>
            <person name="Ansorge W."/>
            <person name="Arino J."/>
            <person name="Benes V."/>
            <person name="Bohn C."/>
            <person name="Bolotin-Fukuhara M."/>
            <person name="Bordonne R."/>
            <person name="Boyer J."/>
            <person name="Camasses A."/>
            <person name="Casamayor A."/>
            <person name="Casas C."/>
            <person name="Cheret G."/>
            <person name="Cziepluch C."/>
            <person name="Daignan-Fornier B."/>
            <person name="Dang V.-D."/>
            <person name="de Haan M."/>
            <person name="Delius H."/>
            <person name="Durand P."/>
            <person name="Fairhead C."/>
            <person name="Feldmann H."/>
            <person name="Gaillon L."/>
            <person name="Galisson F."/>
            <person name="Gamo F.-J."/>
            <person name="Gancedo C."/>
            <person name="Goffeau A."/>
            <person name="Goulding S.E."/>
            <person name="Grivell L.A."/>
            <person name="Habbig B."/>
            <person name="Hand N.J."/>
            <person name="Hani J."/>
            <person name="Hattenhorst U."/>
            <person name="Hebling U."/>
            <person name="Hernando Y."/>
            <person name="Herrero E."/>
            <person name="Heumann K."/>
            <person name="Hiesel R."/>
            <person name="Hilger F."/>
            <person name="Hofmann B."/>
            <person name="Hollenberg C.P."/>
            <person name="Hughes B."/>
            <person name="Jauniaux J.-C."/>
            <person name="Kalogeropoulos A."/>
            <person name="Katsoulou C."/>
            <person name="Kordes E."/>
            <person name="Lafuente M.J."/>
            <person name="Landt O."/>
            <person name="Louis E.J."/>
            <person name="Maarse A.C."/>
            <person name="Madania A."/>
            <person name="Mannhaupt G."/>
            <person name="Marck C."/>
            <person name="Martin R.P."/>
            <person name="Mewes H.-W."/>
            <person name="Michaux G."/>
            <person name="Paces V."/>
            <person name="Parle-McDermott A.G."/>
            <person name="Pearson B.M."/>
            <person name="Perrin A."/>
            <person name="Pettersson B."/>
            <person name="Poch O."/>
            <person name="Pohl T.M."/>
            <person name="Poirey R."/>
            <person name="Portetelle D."/>
            <person name="Pujol A."/>
            <person name="Purnelle B."/>
            <person name="Ramezani Rad M."/>
            <person name="Rechmann S."/>
            <person name="Schwager C."/>
            <person name="Schweizer M."/>
            <person name="Sor F."/>
            <person name="Sterky F."/>
            <person name="Tarassov I.A."/>
            <person name="Teodoru C."/>
            <person name="Tettelin H."/>
            <person name="Thierry A."/>
            <person name="Tobiasch E."/>
            <person name="Tzermia M."/>
            <person name="Uhlen M."/>
            <person name="Unseld M."/>
            <person name="Valens M."/>
            <person name="Vandenbol M."/>
            <person name="Vetter I."/>
            <person name="Vlcek C."/>
            <person name="Voet M."/>
            <person name="Volckaert G."/>
            <person name="Voss H."/>
            <person name="Wambutt R."/>
            <person name="Wedler H."/>
            <person name="Wiemann S."/>
            <person name="Winsor B."/>
            <person name="Wolfe K.H."/>
            <person name="Zollner A."/>
            <person name="Zumstein E."/>
            <person name="Kleine K."/>
        </authorList>
    </citation>
    <scope>NUCLEOTIDE SEQUENCE [LARGE SCALE GENOMIC DNA]</scope>
    <source>
        <strain>ATCC 204508 / S288c</strain>
    </source>
</reference>
<reference key="3">
    <citation type="journal article" date="2014" name="G3 (Bethesda)">
        <title>The reference genome sequence of Saccharomyces cerevisiae: Then and now.</title>
        <authorList>
            <person name="Engel S.R."/>
            <person name="Dietrich F.S."/>
            <person name="Fisk D.G."/>
            <person name="Binkley G."/>
            <person name="Balakrishnan R."/>
            <person name="Costanzo M.C."/>
            <person name="Dwight S.S."/>
            <person name="Hitz B.C."/>
            <person name="Karra K."/>
            <person name="Nash R.S."/>
            <person name="Weng S."/>
            <person name="Wong E.D."/>
            <person name="Lloyd P."/>
            <person name="Skrzypek M.S."/>
            <person name="Miyasato S.R."/>
            <person name="Simison M."/>
            <person name="Cherry J.M."/>
        </authorList>
    </citation>
    <scope>GENOME REANNOTATION</scope>
    <source>
        <strain>ATCC 204508 / S288c</strain>
    </source>
</reference>
<reference key="4">
    <citation type="journal article" date="2007" name="Genome Res.">
        <title>Approaching a complete repository of sequence-verified protein-encoding clones for Saccharomyces cerevisiae.</title>
        <authorList>
            <person name="Hu Y."/>
            <person name="Rolfs A."/>
            <person name="Bhullar B."/>
            <person name="Murthy T.V.S."/>
            <person name="Zhu C."/>
            <person name="Berger M.F."/>
            <person name="Camargo A.A."/>
            <person name="Kelley F."/>
            <person name="McCarron S."/>
            <person name="Jepson D."/>
            <person name="Richardson A."/>
            <person name="Raphael J."/>
            <person name="Moreira D."/>
            <person name="Taycher E."/>
            <person name="Zuo D."/>
            <person name="Mohr S."/>
            <person name="Kane M.F."/>
            <person name="Williamson J."/>
            <person name="Simpson A.J.G."/>
            <person name="Bulyk M.L."/>
            <person name="Harlow E."/>
            <person name="Marsischky G."/>
            <person name="Kolodner R.D."/>
            <person name="LaBaer J."/>
        </authorList>
    </citation>
    <scope>NUCLEOTIDE SEQUENCE [GENOMIC DNA]</scope>
    <source>
        <strain>ATCC 204508 / S288c</strain>
    </source>
</reference>
<reference key="5">
    <citation type="journal article" date="2003" name="Nature">
        <title>Global analysis of protein localization in budding yeast.</title>
        <authorList>
            <person name="Huh W.-K."/>
            <person name="Falvo J.V."/>
            <person name="Gerke L.C."/>
            <person name="Carroll A.S."/>
            <person name="Howson R.W."/>
            <person name="Weissman J.S."/>
            <person name="O'Shea E.K."/>
        </authorList>
    </citation>
    <scope>SUBCELLULAR LOCATION [LARGE SCALE ANALYSIS]</scope>
</reference>
<reference key="6">
    <citation type="journal article" date="2003" name="Nature">
        <title>Global analysis of protein expression in yeast.</title>
        <authorList>
            <person name="Ghaemmaghami S."/>
            <person name="Huh W.-K."/>
            <person name="Bower K."/>
            <person name="Howson R.W."/>
            <person name="Belle A."/>
            <person name="Dephoure N."/>
            <person name="O'Shea E.K."/>
            <person name="Weissman J.S."/>
        </authorList>
    </citation>
    <scope>LEVEL OF PROTEIN EXPRESSION [LARGE SCALE ANALYSIS]</scope>
</reference>
<reference key="7">
    <citation type="journal article" date="2005" name="EMBO J.">
        <title>The Rsp5 ubiquitin ligase is coupled to and antagonized by the Ubp2 deubiquitinating enzyme.</title>
        <authorList>
            <person name="Kee Y."/>
            <person name="Lyon N."/>
            <person name="Huibregtse J.M."/>
        </authorList>
    </citation>
    <scope>FUNCTION</scope>
    <scope>INTERACTION WITH RSP5 AND UBP2</scope>
</reference>
<reference key="8">
    <citation type="journal article" date="2006" name="J. Biol. Chem.">
        <title>The Ubp2 deubiquitinating enzyme modulates Rsp5-dependent K63-linked polyubiquitin conjugates in Saccharomyces cerevisiae.</title>
        <authorList>
            <person name="Kee Y."/>
            <person name="Munoz W."/>
            <person name="Lyon N."/>
            <person name="Huibregtse J.M."/>
        </authorList>
    </citation>
    <scope>FUNCTION</scope>
</reference>
<reference key="9">
    <citation type="journal article" date="2008" name="Mol. Cell. Proteomics">
        <title>A multidimensional chromatography technology for in-depth phosphoproteome analysis.</title>
        <authorList>
            <person name="Albuquerque C.P."/>
            <person name="Smolka M.B."/>
            <person name="Payne S.H."/>
            <person name="Bafna V."/>
            <person name="Eng J."/>
            <person name="Zhou H."/>
        </authorList>
    </citation>
    <scope>PHOSPHORYLATION [LARGE SCALE ANALYSIS] AT SER-56</scope>
    <scope>IDENTIFICATION BY MASS SPECTROMETRY [LARGE SCALE ANALYSIS]</scope>
</reference>
<reference key="10">
    <citation type="journal article" date="2009" name="Science">
        <title>Global analysis of Cdk1 substrate phosphorylation sites provides insights into evolution.</title>
        <authorList>
            <person name="Holt L.J."/>
            <person name="Tuch B.B."/>
            <person name="Villen J."/>
            <person name="Johnson A.D."/>
            <person name="Gygi S.P."/>
            <person name="Morgan D.O."/>
        </authorList>
    </citation>
    <scope>IDENTIFICATION BY MASS SPECTROMETRY [LARGE SCALE ANALYSIS]</scope>
</reference>
<reference key="11">
    <citation type="journal article" date="2012" name="Proc. Natl. Acad. Sci. U.S.A.">
        <title>N-terminal acetylome analyses and functional insights of the N-terminal acetyltransferase NatB.</title>
        <authorList>
            <person name="Van Damme P."/>
            <person name="Lasa M."/>
            <person name="Polevoda B."/>
            <person name="Gazquez C."/>
            <person name="Elosegui-Artola A."/>
            <person name="Kim D.S."/>
            <person name="De Juan-Pardo E."/>
            <person name="Demeyer K."/>
            <person name="Hole K."/>
            <person name="Larrea E."/>
            <person name="Timmerman E."/>
            <person name="Prieto J."/>
            <person name="Arnesen T."/>
            <person name="Sherman F."/>
            <person name="Gevaert K."/>
            <person name="Aldabe R."/>
        </authorList>
    </citation>
    <scope>IDENTIFICATION BY MASS SPECTROMETRY [LARGE SCALE ANALYSIS]</scope>
</reference>
<feature type="chain" id="PRO_0000269644" description="UBA domain-containing protein RUP1">
    <location>
        <begin position="1"/>
        <end position="671"/>
    </location>
</feature>
<feature type="domain" description="UBA" evidence="2">
    <location>
        <begin position="1"/>
        <end position="41"/>
    </location>
</feature>
<feature type="region of interest" description="Disordered" evidence="3">
    <location>
        <begin position="68"/>
        <end position="87"/>
    </location>
</feature>
<feature type="region of interest" description="Disordered" evidence="3">
    <location>
        <begin position="643"/>
        <end position="671"/>
    </location>
</feature>
<feature type="coiled-coil region" evidence="1">
    <location>
        <begin position="432"/>
        <end position="501"/>
    </location>
</feature>
<feature type="compositionally biased region" description="Acidic residues" evidence="3">
    <location>
        <begin position="661"/>
        <end position="671"/>
    </location>
</feature>
<feature type="modified residue" description="Phosphoserine" evidence="8">
    <location>
        <position position="56"/>
    </location>
</feature>
<sequence length="671" mass="75361">MMDNQAVKSLLEMGIPHEVAVDALQRTGGNLEAAVNFIFSNELPEQAEMGEENDGSQPRISENKIVAGTKPCDVPNNGDQDIDMPDVSGVDVDYDDDEDITDERSGSNSTSGCRVTAQNYDRYSISETSIPPPSYSIVQHNEFKSNVGDPTVVLPLPLNSLIESYFGLFALLTAVYFPHVFLKPDFKDLNYRADWFKGSSFTEPKYRLAYCEAEDGSTTSEIVLASGPNEGLQPHLLWQLQKLISVVNTRKCERAFVSAKVFTSSLEPQLRSKLADSEHLYEVLPAFIKSLAVDLEMCPGIRDRETRSLFISSALHTPNKNEPPMETFLSLFHFLPEEYDSNLYKMFNVLLYPEEEEEEEDVIRGGEQEEARYVEPENTLKEVAPVLTILFNELETNTESVSLPNGVDIPLEFYPQLYTKQCKDQLIRHIISKRKQARTRSRCLLQEINELKSYQGKNISTILESTLAYLQTIPDDANNEAAKQIASLKDTLNSARAAKMEEYKDLASKLHGEWNLSHPETHIINTAKQLGLIENPYILTMAALSPYSYFIRSRNGAWSWIQSNTLGTEFKVKKCSSPSVVQEAIKHGTKYASETPLMFIYCEEGKIPTEEVVAEALKSNSGCLKFAEDDQNSLKTLRSQFFDGMGDPEQATNNINNGNDNDNDDDIDSDN</sequence>
<evidence type="ECO:0000255" key="1"/>
<evidence type="ECO:0000255" key="2">
    <source>
        <dbReference type="PROSITE-ProRule" id="PRU00212"/>
    </source>
</evidence>
<evidence type="ECO:0000256" key="3">
    <source>
        <dbReference type="SAM" id="MobiDB-lite"/>
    </source>
</evidence>
<evidence type="ECO:0000269" key="4">
    <source>
    </source>
</evidence>
<evidence type="ECO:0000269" key="5">
    <source>
    </source>
</evidence>
<evidence type="ECO:0000269" key="6">
    <source>
    </source>
</evidence>
<evidence type="ECO:0000269" key="7">
    <source>
    </source>
</evidence>
<evidence type="ECO:0007744" key="8">
    <source>
    </source>
</evidence>
<comment type="function">
    <text evidence="6 7">Modulates the activity of the RSP5 HECT ubiquitin-protein ligase through its mediation of the interaction between RSP5 and the deubiquitinase UBP2. Involved in regulation of cell wall homeostasis.</text>
</comment>
<comment type="subunit">
    <text>Forms a ternary complex with RSP5 and UBP2.</text>
</comment>
<comment type="interaction">
    <interactant intactId="EBI-38794">
        <id>Q12242</id>
    </interactant>
    <interactant intactId="EBI-19826">
        <id>Q01476</id>
        <label>UBP2</label>
    </interactant>
    <organismsDiffer>false</organismsDiffer>
    <experiments>4</experiments>
</comment>
<comment type="subcellular location">
    <subcellularLocation>
        <location evidence="4">Cytoplasm</location>
    </subcellularLocation>
    <subcellularLocation>
        <location evidence="4">Nucleus</location>
    </subcellularLocation>
</comment>
<comment type="miscellaneous">
    <text evidence="5">Present with 5930 molecules/cell in log phase SD medium.</text>
</comment>
<dbReference type="EMBL" id="X94335">
    <property type="protein sequence ID" value="CAA64056.1"/>
    <property type="molecule type" value="Genomic_DNA"/>
</dbReference>
<dbReference type="EMBL" id="Z75046">
    <property type="protein sequence ID" value="CAA99337.1"/>
    <property type="molecule type" value="Genomic_DNA"/>
</dbReference>
<dbReference type="EMBL" id="AY692617">
    <property type="protein sequence ID" value="AAT92636.1"/>
    <property type="molecule type" value="Genomic_DNA"/>
</dbReference>
<dbReference type="EMBL" id="BK006948">
    <property type="protein sequence ID" value="DAA10911.1"/>
    <property type="molecule type" value="Genomic_DNA"/>
</dbReference>
<dbReference type="PIR" id="S61693">
    <property type="entry name" value="S61693"/>
</dbReference>
<dbReference type="RefSeq" id="NP_014781.1">
    <property type="nucleotide sequence ID" value="NM_001183557.1"/>
</dbReference>
<dbReference type="SMR" id="Q12242"/>
<dbReference type="BioGRID" id="34533">
    <property type="interactions" value="78"/>
</dbReference>
<dbReference type="DIP" id="DIP-1986N"/>
<dbReference type="FunCoup" id="Q12242">
    <property type="interactions" value="208"/>
</dbReference>
<dbReference type="IntAct" id="Q12242">
    <property type="interactions" value="9"/>
</dbReference>
<dbReference type="MINT" id="Q12242"/>
<dbReference type="STRING" id="4932.YOR138C"/>
<dbReference type="iPTMnet" id="Q12242"/>
<dbReference type="PaxDb" id="4932-YOR138C"/>
<dbReference type="PeptideAtlas" id="Q12242"/>
<dbReference type="EnsemblFungi" id="YOR138C_mRNA">
    <property type="protein sequence ID" value="YOR138C"/>
    <property type="gene ID" value="YOR138C"/>
</dbReference>
<dbReference type="GeneID" id="854306"/>
<dbReference type="KEGG" id="sce:YOR138C"/>
<dbReference type="AGR" id="SGD:S000005664"/>
<dbReference type="SGD" id="S000005664">
    <property type="gene designation" value="RUP1"/>
</dbReference>
<dbReference type="VEuPathDB" id="FungiDB:YOR138C"/>
<dbReference type="eggNOG" id="ENOG502S0Z0">
    <property type="taxonomic scope" value="Eukaryota"/>
</dbReference>
<dbReference type="HOGENOM" id="CLU_028632_0_0_1"/>
<dbReference type="InParanoid" id="Q12242"/>
<dbReference type="OMA" id="PLEFYPQ"/>
<dbReference type="OrthoDB" id="4489171at2759"/>
<dbReference type="BioCyc" id="YEAST:G3O-33660-MONOMER"/>
<dbReference type="BioGRID-ORCS" id="854306">
    <property type="hits" value="4 hits in 10 CRISPR screens"/>
</dbReference>
<dbReference type="PRO" id="PR:Q12242"/>
<dbReference type="Proteomes" id="UP000002311">
    <property type="component" value="Chromosome XV"/>
</dbReference>
<dbReference type="RNAct" id="Q12242">
    <property type="molecule type" value="protein"/>
</dbReference>
<dbReference type="GO" id="GO:0005737">
    <property type="term" value="C:cytoplasm"/>
    <property type="evidence" value="ECO:0007005"/>
    <property type="project" value="SGD"/>
</dbReference>
<dbReference type="GO" id="GO:0005634">
    <property type="term" value="C:nucleus"/>
    <property type="evidence" value="ECO:0007005"/>
    <property type="project" value="SGD"/>
</dbReference>
<dbReference type="GO" id="GO:1902499">
    <property type="term" value="P:positive regulation of protein autoubiquitination"/>
    <property type="evidence" value="ECO:0000314"/>
    <property type="project" value="SGD"/>
</dbReference>
<dbReference type="GO" id="GO:0016579">
    <property type="term" value="P:protein deubiquitination"/>
    <property type="evidence" value="ECO:0000315"/>
    <property type="project" value="SGD"/>
</dbReference>
<dbReference type="CDD" id="cd14307">
    <property type="entry name" value="UBA_RUP1p"/>
    <property type="match status" value="1"/>
</dbReference>
<dbReference type="Gene3D" id="1.10.8.10">
    <property type="entry name" value="DNA helicase RuvA subunit, C-terminal domain"/>
    <property type="match status" value="1"/>
</dbReference>
<dbReference type="InterPro" id="IPR041970">
    <property type="entry name" value="Rup1_UBA"/>
</dbReference>
<dbReference type="InterPro" id="IPR015940">
    <property type="entry name" value="UBA"/>
</dbReference>
<dbReference type="InterPro" id="IPR009060">
    <property type="entry name" value="UBA-like_sf"/>
</dbReference>
<dbReference type="InterPro" id="IPR055335">
    <property type="entry name" value="Ucp6/RUP1"/>
</dbReference>
<dbReference type="PANTHER" id="PTHR39597">
    <property type="entry name" value="UBA DOMAIN-CONTAINING PROTEIN RUP1"/>
    <property type="match status" value="1"/>
</dbReference>
<dbReference type="PANTHER" id="PTHR39597:SF1">
    <property type="entry name" value="UBA DOMAIN-CONTAINING PROTEIN RUP1"/>
    <property type="match status" value="1"/>
</dbReference>
<dbReference type="Pfam" id="PF22562">
    <property type="entry name" value="UBA_7"/>
    <property type="match status" value="1"/>
</dbReference>
<dbReference type="SMART" id="SM00165">
    <property type="entry name" value="UBA"/>
    <property type="match status" value="1"/>
</dbReference>
<dbReference type="SUPFAM" id="SSF46934">
    <property type="entry name" value="UBA-like"/>
    <property type="match status" value="1"/>
</dbReference>
<dbReference type="PROSITE" id="PS50030">
    <property type="entry name" value="UBA"/>
    <property type="match status" value="1"/>
</dbReference>
<keyword id="KW-0175">Coiled coil</keyword>
<keyword id="KW-0963">Cytoplasm</keyword>
<keyword id="KW-0539">Nucleus</keyword>
<keyword id="KW-0597">Phosphoprotein</keyword>
<keyword id="KW-1185">Reference proteome</keyword>
<keyword id="KW-0833">Ubl conjugation pathway</keyword>
<proteinExistence type="evidence at protein level"/>
<protein>
    <recommendedName>
        <fullName>UBA domain-containing protein RUP1</fullName>
    </recommendedName>
</protein>
<name>RUP1_YEAST</name>
<organism>
    <name type="scientific">Saccharomyces cerevisiae (strain ATCC 204508 / S288c)</name>
    <name type="common">Baker's yeast</name>
    <dbReference type="NCBI Taxonomy" id="559292"/>
    <lineage>
        <taxon>Eukaryota</taxon>
        <taxon>Fungi</taxon>
        <taxon>Dikarya</taxon>
        <taxon>Ascomycota</taxon>
        <taxon>Saccharomycotina</taxon>
        <taxon>Saccharomycetes</taxon>
        <taxon>Saccharomycetales</taxon>
        <taxon>Saccharomycetaceae</taxon>
        <taxon>Saccharomyces</taxon>
    </lineage>
</organism>